<protein>
    <recommendedName>
        <fullName>Probable kinetochore protein ndc80</fullName>
    </recommendedName>
</protein>
<name>NDC80_EMENI</name>
<gene>
    <name type="primary">ndc80</name>
    <name type="ORF">AN4969</name>
</gene>
<keyword id="KW-0131">Cell cycle</keyword>
<keyword id="KW-0132">Cell division</keyword>
<keyword id="KW-0137">Centromere</keyword>
<keyword id="KW-0158">Chromosome</keyword>
<keyword id="KW-0175">Coiled coil</keyword>
<keyword id="KW-0995">Kinetochore</keyword>
<keyword id="KW-0498">Mitosis</keyword>
<keyword id="KW-0539">Nucleus</keyword>
<keyword id="KW-1185">Reference proteome</keyword>
<comment type="function">
    <text evidence="1">Acts as a component of the essential kinetochore-associated NDC80 complex, which is required for chromosome segregation and spindle checkpoint activity.</text>
</comment>
<comment type="subunit">
    <text evidence="1">Component of the NDC80 complex, which consists of ndc80, nuf2, spc24 and spc25.</text>
</comment>
<comment type="subcellular location">
    <subcellularLocation>
        <location evidence="1">Nucleus</location>
    </subcellularLocation>
    <subcellularLocation>
        <location evidence="1">Chromosome</location>
        <location evidence="1">Centromere</location>
        <location evidence="1">Kinetochore</location>
    </subcellularLocation>
    <text evidence="1">Associated with kinetochores.</text>
</comment>
<comment type="similarity">
    <text evidence="4">Belongs to the NDC80/HEC1 family.</text>
</comment>
<organism>
    <name type="scientific">Emericella nidulans (strain FGSC A4 / ATCC 38163 / CBS 112.46 / NRRL 194 / M139)</name>
    <name type="common">Aspergillus nidulans</name>
    <dbReference type="NCBI Taxonomy" id="227321"/>
    <lineage>
        <taxon>Eukaryota</taxon>
        <taxon>Fungi</taxon>
        <taxon>Dikarya</taxon>
        <taxon>Ascomycota</taxon>
        <taxon>Pezizomycotina</taxon>
        <taxon>Eurotiomycetes</taxon>
        <taxon>Eurotiomycetidae</taxon>
        <taxon>Eurotiales</taxon>
        <taxon>Aspergillaceae</taxon>
        <taxon>Aspergillus</taxon>
        <taxon>Aspergillus subgen. Nidulantes</taxon>
    </lineage>
</organism>
<accession>Q5B3B1</accession>
<accession>C8V902</accession>
<proteinExistence type="inferred from homology"/>
<reference key="1">
    <citation type="journal article" date="2005" name="Nature">
        <title>Sequencing of Aspergillus nidulans and comparative analysis with A. fumigatus and A. oryzae.</title>
        <authorList>
            <person name="Galagan J.E."/>
            <person name="Calvo S.E."/>
            <person name="Cuomo C."/>
            <person name="Ma L.-J."/>
            <person name="Wortman J.R."/>
            <person name="Batzoglou S."/>
            <person name="Lee S.-I."/>
            <person name="Bastuerkmen M."/>
            <person name="Spevak C.C."/>
            <person name="Clutterbuck J."/>
            <person name="Kapitonov V."/>
            <person name="Jurka J."/>
            <person name="Scazzocchio C."/>
            <person name="Farman M.L."/>
            <person name="Butler J."/>
            <person name="Purcell S."/>
            <person name="Harris S."/>
            <person name="Braus G.H."/>
            <person name="Draht O."/>
            <person name="Busch S."/>
            <person name="D'Enfert C."/>
            <person name="Bouchier C."/>
            <person name="Goldman G.H."/>
            <person name="Bell-Pedersen D."/>
            <person name="Griffiths-Jones S."/>
            <person name="Doonan J.H."/>
            <person name="Yu J."/>
            <person name="Vienken K."/>
            <person name="Pain A."/>
            <person name="Freitag M."/>
            <person name="Selker E.U."/>
            <person name="Archer D.B."/>
            <person name="Penalva M.A."/>
            <person name="Oakley B.R."/>
            <person name="Momany M."/>
            <person name="Tanaka T."/>
            <person name="Kumagai T."/>
            <person name="Asai K."/>
            <person name="Machida M."/>
            <person name="Nierman W.C."/>
            <person name="Denning D.W."/>
            <person name="Caddick M.X."/>
            <person name="Hynes M."/>
            <person name="Paoletti M."/>
            <person name="Fischer R."/>
            <person name="Miller B.L."/>
            <person name="Dyer P.S."/>
            <person name="Sachs M.S."/>
            <person name="Osmani S.A."/>
            <person name="Birren B.W."/>
        </authorList>
    </citation>
    <scope>NUCLEOTIDE SEQUENCE [LARGE SCALE GENOMIC DNA]</scope>
    <source>
        <strain>FGSC A4 / ATCC 38163 / CBS 112.46 / NRRL 194 / M139</strain>
    </source>
</reference>
<reference key="2">
    <citation type="journal article" date="2009" name="Fungal Genet. Biol.">
        <title>The 2008 update of the Aspergillus nidulans genome annotation: a community effort.</title>
        <authorList>
            <person name="Wortman J.R."/>
            <person name="Gilsenan J.M."/>
            <person name="Joardar V."/>
            <person name="Deegan J."/>
            <person name="Clutterbuck J."/>
            <person name="Andersen M.R."/>
            <person name="Archer D."/>
            <person name="Bencina M."/>
            <person name="Braus G."/>
            <person name="Coutinho P."/>
            <person name="von Dohren H."/>
            <person name="Doonan J."/>
            <person name="Driessen A.J."/>
            <person name="Durek P."/>
            <person name="Espeso E."/>
            <person name="Fekete E."/>
            <person name="Flipphi M."/>
            <person name="Estrada C.G."/>
            <person name="Geysens S."/>
            <person name="Goldman G."/>
            <person name="de Groot P.W."/>
            <person name="Hansen K."/>
            <person name="Harris S.D."/>
            <person name="Heinekamp T."/>
            <person name="Helmstaedt K."/>
            <person name="Henrissat B."/>
            <person name="Hofmann G."/>
            <person name="Homan T."/>
            <person name="Horio T."/>
            <person name="Horiuchi H."/>
            <person name="James S."/>
            <person name="Jones M."/>
            <person name="Karaffa L."/>
            <person name="Karanyi Z."/>
            <person name="Kato M."/>
            <person name="Keller N."/>
            <person name="Kelly D.E."/>
            <person name="Kiel J.A."/>
            <person name="Kim J.M."/>
            <person name="van der Klei I.J."/>
            <person name="Klis F.M."/>
            <person name="Kovalchuk A."/>
            <person name="Krasevec N."/>
            <person name="Kubicek C.P."/>
            <person name="Liu B."/>
            <person name="Maccabe A."/>
            <person name="Meyer V."/>
            <person name="Mirabito P."/>
            <person name="Miskei M."/>
            <person name="Mos M."/>
            <person name="Mullins J."/>
            <person name="Nelson D.R."/>
            <person name="Nielsen J."/>
            <person name="Oakley B.R."/>
            <person name="Osmani S.A."/>
            <person name="Pakula T."/>
            <person name="Paszewski A."/>
            <person name="Paulsen I."/>
            <person name="Pilsyk S."/>
            <person name="Pocsi I."/>
            <person name="Punt P.J."/>
            <person name="Ram A.F."/>
            <person name="Ren Q."/>
            <person name="Robellet X."/>
            <person name="Robson G."/>
            <person name="Seiboth B."/>
            <person name="van Solingen P."/>
            <person name="Specht T."/>
            <person name="Sun J."/>
            <person name="Taheri-Talesh N."/>
            <person name="Takeshita N."/>
            <person name="Ussery D."/>
            <person name="vanKuyk P.A."/>
            <person name="Visser H."/>
            <person name="van de Vondervoort P.J."/>
            <person name="de Vries R.P."/>
            <person name="Walton J."/>
            <person name="Xiang X."/>
            <person name="Xiong Y."/>
            <person name="Zeng A.P."/>
            <person name="Brandt B.W."/>
            <person name="Cornell M.J."/>
            <person name="van den Hondel C.A."/>
            <person name="Visser J."/>
            <person name="Oliver S.G."/>
            <person name="Turner G."/>
        </authorList>
    </citation>
    <scope>GENOME REANNOTATION</scope>
    <source>
        <strain>FGSC A4 / ATCC 38163 / CBS 112.46 / NRRL 194 / M139</strain>
    </source>
</reference>
<sequence length="738" mass="84067">MSQDTGLFSIKRPRETLGSVQNFSSLPQPSSALKRTSSIGYQNPPFTSQHTRSMSLLNSVGRPQQPNFQRSSSGGFGADPGLSSVRRSVSSNVFHGTSAGRPSFAPGSMSSNPASQSLQRRSSVFSRPSTGGAMGHQSFFTQVPSAAGVPRDPRPLRDRSFQARIAQELLEYLTHNNFELEMKHSLGQNTLRSPTQKDFNYIFQWLYHRIDPGYRFQKAMDAEVPPILKQLRYPYEKGITKSQIAAVGGQNWPTFLGMLHWLMELAQMMDRFAMGEYDEACAEMGVDVSGDRIIFRFLTGAYHDWLQGGEEEDDDAAAQRLIPHIELMAQEFEKGNEKYVQEMQVLDAENRALRDQIEELEKNAPDMAKLDKQFRILEDDKRKFEDYIQNVQGKIEKYESRIAFLEDEIRKTESELQAAEEERAGLQASVDQQGLTIQDIDRMNTERDRLQRSLDDAVSRLEETHARVMAKESEASAKLEDLEELVKTYNTLGYQNSLIPSTAVNANGQEYELGLNVNERSFSTSQIGGIPSRISPEADRLLAEPFTGYHPAHLLNLDLRGIVRSNLQALRKEINERRKRGIDADLERRNLLDNIKEAMDEKRSEVEALEHKRRTAEEEFERLKEVTTTQKLASDAQIEKMEKELAKMRATMSESVQLMEQREMNTNIEYEQLTLRANALREELHTNVESMLNDVIRFKVHIQKGLEDYENFVVDEVEQELGGDTQLDEDAPMSTEEL</sequence>
<dbReference type="EMBL" id="AACD01000084">
    <property type="protein sequence ID" value="EAA61047.1"/>
    <property type="molecule type" value="Genomic_DNA"/>
</dbReference>
<dbReference type="EMBL" id="BN001303">
    <property type="protein sequence ID" value="CBF76372.1"/>
    <property type="molecule type" value="Genomic_DNA"/>
</dbReference>
<dbReference type="RefSeq" id="XP_662573.1">
    <property type="nucleotide sequence ID" value="XM_657481.1"/>
</dbReference>
<dbReference type="SMR" id="Q5B3B1"/>
<dbReference type="FunCoup" id="Q5B3B1">
    <property type="interactions" value="270"/>
</dbReference>
<dbReference type="STRING" id="227321.Q5B3B1"/>
<dbReference type="EnsemblFungi" id="CBF76372">
    <property type="protein sequence ID" value="CBF76372"/>
    <property type="gene ID" value="ANIA_04969"/>
</dbReference>
<dbReference type="KEGG" id="ani:ANIA_04969"/>
<dbReference type="VEuPathDB" id="FungiDB:AN4969"/>
<dbReference type="eggNOG" id="KOG0995">
    <property type="taxonomic scope" value="Eukaryota"/>
</dbReference>
<dbReference type="HOGENOM" id="CLU_012583_0_0_1"/>
<dbReference type="InParanoid" id="Q5B3B1"/>
<dbReference type="OMA" id="PSHKFQK"/>
<dbReference type="OrthoDB" id="7459479at2759"/>
<dbReference type="Proteomes" id="UP000000560">
    <property type="component" value="Chromosome III"/>
</dbReference>
<dbReference type="GO" id="GO:0000775">
    <property type="term" value="C:chromosome, centromeric region"/>
    <property type="evidence" value="ECO:0000314"/>
    <property type="project" value="AspGD"/>
</dbReference>
<dbReference type="GO" id="GO:0031262">
    <property type="term" value="C:Ndc80 complex"/>
    <property type="evidence" value="ECO:0000250"/>
    <property type="project" value="UniProtKB"/>
</dbReference>
<dbReference type="GO" id="GO:0005634">
    <property type="term" value="C:nucleus"/>
    <property type="evidence" value="ECO:0007669"/>
    <property type="project" value="UniProtKB-SubCell"/>
</dbReference>
<dbReference type="GO" id="GO:0008017">
    <property type="term" value="F:microtubule binding"/>
    <property type="evidence" value="ECO:0000250"/>
    <property type="project" value="UniProtKB"/>
</dbReference>
<dbReference type="GO" id="GO:0051315">
    <property type="term" value="P:attachment of mitotic spindle microtubules to kinetochore"/>
    <property type="evidence" value="ECO:0000318"/>
    <property type="project" value="GO_Central"/>
</dbReference>
<dbReference type="GO" id="GO:0051301">
    <property type="term" value="P:cell division"/>
    <property type="evidence" value="ECO:0007669"/>
    <property type="project" value="UniProtKB-KW"/>
</dbReference>
<dbReference type="GO" id="GO:1990758">
    <property type="term" value="P:mitotic sister chromatid biorientation"/>
    <property type="evidence" value="ECO:0000250"/>
    <property type="project" value="UniProtKB"/>
</dbReference>
<dbReference type="FunFam" id="1.10.418.30:FF:000001">
    <property type="entry name" value="Probable kinetochore protein ndc80"/>
    <property type="match status" value="1"/>
</dbReference>
<dbReference type="Gene3D" id="1.10.287.1490">
    <property type="match status" value="1"/>
</dbReference>
<dbReference type="Gene3D" id="1.10.418.30">
    <property type="entry name" value="Ncd80 complex, Ncd80 subunit"/>
    <property type="match status" value="1"/>
</dbReference>
<dbReference type="InterPro" id="IPR005550">
    <property type="entry name" value="Kinetochore_Ndc80"/>
</dbReference>
<dbReference type="InterPro" id="IPR055260">
    <property type="entry name" value="Ndc80_CH"/>
</dbReference>
<dbReference type="InterPro" id="IPR038273">
    <property type="entry name" value="Ndc80_sf"/>
</dbReference>
<dbReference type="PANTHER" id="PTHR10643">
    <property type="entry name" value="KINETOCHORE PROTEIN NDC80"/>
    <property type="match status" value="1"/>
</dbReference>
<dbReference type="PANTHER" id="PTHR10643:SF2">
    <property type="entry name" value="KINETOCHORE PROTEIN NDC80 HOMOLOG"/>
    <property type="match status" value="1"/>
</dbReference>
<dbReference type="Pfam" id="PF03801">
    <property type="entry name" value="Ndc80_HEC"/>
    <property type="match status" value="1"/>
</dbReference>
<evidence type="ECO:0000250" key="1"/>
<evidence type="ECO:0000255" key="2"/>
<evidence type="ECO:0000256" key="3">
    <source>
        <dbReference type="SAM" id="MobiDB-lite"/>
    </source>
</evidence>
<evidence type="ECO:0000305" key="4"/>
<feature type="chain" id="PRO_0000246638" description="Probable kinetochore protein ndc80">
    <location>
        <begin position="1"/>
        <end position="738"/>
    </location>
</feature>
<feature type="region of interest" description="Disordered" evidence="3">
    <location>
        <begin position="20"/>
        <end position="151"/>
    </location>
</feature>
<feature type="coiled-coil region" evidence="2">
    <location>
        <begin position="329"/>
        <end position="492"/>
    </location>
</feature>
<feature type="coiled-coil region" evidence="2">
    <location>
        <begin position="582"/>
        <end position="689"/>
    </location>
</feature>
<feature type="compositionally biased region" description="Polar residues" evidence="3">
    <location>
        <begin position="20"/>
        <end position="73"/>
    </location>
</feature>
<feature type="compositionally biased region" description="Polar residues" evidence="3">
    <location>
        <begin position="108"/>
        <end position="129"/>
    </location>
</feature>